<protein>
    <recommendedName>
        <fullName evidence="2">Translation initiation factor IF-2</fullName>
    </recommendedName>
</protein>
<organism>
    <name type="scientific">Leuconostoc mesenteroides subsp. mesenteroides (strain ATCC 8293 / DSM 20343 / BCRC 11652 / CCM 1803 / JCM 6124 / NCDO 523 / NBRC 100496 / NCIMB 8023 / NCTC 12954 / NRRL B-1118 / 37Y)</name>
    <dbReference type="NCBI Taxonomy" id="203120"/>
    <lineage>
        <taxon>Bacteria</taxon>
        <taxon>Bacillati</taxon>
        <taxon>Bacillota</taxon>
        <taxon>Bacilli</taxon>
        <taxon>Lactobacillales</taxon>
        <taxon>Lactobacillaceae</taxon>
        <taxon>Leuconostoc</taxon>
    </lineage>
</organism>
<accession>Q03WH4</accession>
<gene>
    <name evidence="2" type="primary">infB</name>
    <name type="ordered locus">LEUM_1355</name>
</gene>
<comment type="function">
    <text evidence="2">One of the essential components for the initiation of protein synthesis. Protects formylmethionyl-tRNA from spontaneous hydrolysis and promotes its binding to the 30S ribosomal subunits. Also involved in the hydrolysis of GTP during the formation of the 70S ribosomal complex.</text>
</comment>
<comment type="subcellular location">
    <subcellularLocation>
        <location evidence="2">Cytoplasm</location>
    </subcellularLocation>
</comment>
<comment type="similarity">
    <text evidence="2">Belongs to the TRAFAC class translation factor GTPase superfamily. Classic translation factor GTPase family. IF-2 subfamily.</text>
</comment>
<keyword id="KW-0963">Cytoplasm</keyword>
<keyword id="KW-0342">GTP-binding</keyword>
<keyword id="KW-0396">Initiation factor</keyword>
<keyword id="KW-0547">Nucleotide-binding</keyword>
<keyword id="KW-0648">Protein biosynthesis</keyword>
<keyword id="KW-1185">Reference proteome</keyword>
<evidence type="ECO:0000250" key="1"/>
<evidence type="ECO:0000255" key="2">
    <source>
        <dbReference type="HAMAP-Rule" id="MF_00100"/>
    </source>
</evidence>
<evidence type="ECO:0000256" key="3">
    <source>
        <dbReference type="SAM" id="MobiDB-lite"/>
    </source>
</evidence>
<feature type="chain" id="PRO_0000335488" description="Translation initiation factor IF-2">
    <location>
        <begin position="1"/>
        <end position="834"/>
    </location>
</feature>
<feature type="domain" description="tr-type G">
    <location>
        <begin position="335"/>
        <end position="504"/>
    </location>
</feature>
<feature type="region of interest" description="Disordered" evidence="3">
    <location>
        <begin position="1"/>
        <end position="247"/>
    </location>
</feature>
<feature type="region of interest" description="G1" evidence="1">
    <location>
        <begin position="344"/>
        <end position="351"/>
    </location>
</feature>
<feature type="region of interest" description="G2" evidence="1">
    <location>
        <begin position="369"/>
        <end position="373"/>
    </location>
</feature>
<feature type="region of interest" description="G3" evidence="1">
    <location>
        <begin position="390"/>
        <end position="393"/>
    </location>
</feature>
<feature type="region of interest" description="G4" evidence="1">
    <location>
        <begin position="444"/>
        <end position="447"/>
    </location>
</feature>
<feature type="region of interest" description="G5" evidence="1">
    <location>
        <begin position="480"/>
        <end position="482"/>
    </location>
</feature>
<feature type="compositionally biased region" description="Low complexity" evidence="3">
    <location>
        <begin position="45"/>
        <end position="101"/>
    </location>
</feature>
<feature type="compositionally biased region" description="Basic and acidic residues" evidence="3">
    <location>
        <begin position="109"/>
        <end position="125"/>
    </location>
</feature>
<feature type="compositionally biased region" description="Low complexity" evidence="3">
    <location>
        <begin position="149"/>
        <end position="165"/>
    </location>
</feature>
<feature type="compositionally biased region" description="Low complexity" evidence="3">
    <location>
        <begin position="173"/>
        <end position="201"/>
    </location>
</feature>
<feature type="compositionally biased region" description="Basic residues" evidence="3">
    <location>
        <begin position="224"/>
        <end position="233"/>
    </location>
</feature>
<feature type="binding site" evidence="2">
    <location>
        <begin position="344"/>
        <end position="351"/>
    </location>
    <ligand>
        <name>GTP</name>
        <dbReference type="ChEBI" id="CHEBI:37565"/>
    </ligand>
</feature>
<feature type="binding site" evidence="2">
    <location>
        <begin position="390"/>
        <end position="394"/>
    </location>
    <ligand>
        <name>GTP</name>
        <dbReference type="ChEBI" id="CHEBI:37565"/>
    </ligand>
</feature>
<feature type="binding site" evidence="2">
    <location>
        <begin position="444"/>
        <end position="447"/>
    </location>
    <ligand>
        <name>GTP</name>
        <dbReference type="ChEBI" id="CHEBI:37565"/>
    </ligand>
</feature>
<sequence>MTEEKKFSGSNRPARKQAVPERKELPASQRRHAAKLADGTTPAQGGSRPSRPARPNNNNQNRPNNGGQSQNRNNQNRSNTSTGGQNRSNNGGNRNNRPGSRVAPAEGRPMIREKKNWSTKPREGQVDYSAKPDNSLKQYVNENEKKRQASAAAKHPKKPAAATKPAVKKETSATKPATASTTTGAGKFGGALASGNNSARNNSRKRNTNGTGQQTPRRNDRPRGSKKSRRIAAKHQPSTPATVRKEQPLPAVLEYRVGMNVQDLSKLLHRDTAEIIKKLFLLGIVTNQNQSLDEDTIEILAADYGIEAQAKEEEDVADIDRFFDDENIDESKLVSRPPVVTIMGHVDHGKTTLLDYLRNSHVTEGEAGGITQHIGAYQTRINDKLITFLDTPGHAAFTEMRARGANVTDLTILVVAADDGVMPQTIEAINHAKAAGTPIIVAVNKIDKPGANPDDVMNQLMAYDLVPEEYGGDTIFVKISAKFGQNVDELLEMILLQAEVLELKANPNMPARGSVIEARLDKGRGPVSTVLVQQGTMHVGDPIVVGNTYGRVRTMTNERGVELSEALPATPIQITGLNGVPQAGDRFIVMADEKTARAAGEERAKRAQEAVRNSGSVVTLDTLFNTMAEKAMKTVPVIVKADVQGSVEALSGSLKKIEVDGVRVDIIHTAVGAINESDVTLAEASGAIIIGFNVRPTPLAKSQSDSEKVDIRFYNVIYNAIDDVEAAMKGQLEPVYEEKVIGKVEVKELFKFSKVGTIAGAMVEEGKITKDSKVRVIRDNVVVFDGEVGSLQRGKDAVNEVKMGFEFGFTVAKFNDVHAGDVVEAYVMEEVKPK</sequence>
<reference key="1">
    <citation type="journal article" date="2006" name="Proc. Natl. Acad. Sci. U.S.A.">
        <title>Comparative genomics of the lactic acid bacteria.</title>
        <authorList>
            <person name="Makarova K.S."/>
            <person name="Slesarev A."/>
            <person name="Wolf Y.I."/>
            <person name="Sorokin A."/>
            <person name="Mirkin B."/>
            <person name="Koonin E.V."/>
            <person name="Pavlov A."/>
            <person name="Pavlova N."/>
            <person name="Karamychev V."/>
            <person name="Polouchine N."/>
            <person name="Shakhova V."/>
            <person name="Grigoriev I."/>
            <person name="Lou Y."/>
            <person name="Rohksar D."/>
            <person name="Lucas S."/>
            <person name="Huang K."/>
            <person name="Goodstein D.M."/>
            <person name="Hawkins T."/>
            <person name="Plengvidhya V."/>
            <person name="Welker D."/>
            <person name="Hughes J."/>
            <person name="Goh Y."/>
            <person name="Benson A."/>
            <person name="Baldwin K."/>
            <person name="Lee J.-H."/>
            <person name="Diaz-Muniz I."/>
            <person name="Dosti B."/>
            <person name="Smeianov V."/>
            <person name="Wechter W."/>
            <person name="Barabote R."/>
            <person name="Lorca G."/>
            <person name="Altermann E."/>
            <person name="Barrangou R."/>
            <person name="Ganesan B."/>
            <person name="Xie Y."/>
            <person name="Rawsthorne H."/>
            <person name="Tamir D."/>
            <person name="Parker C."/>
            <person name="Breidt F."/>
            <person name="Broadbent J.R."/>
            <person name="Hutkins R."/>
            <person name="O'Sullivan D."/>
            <person name="Steele J."/>
            <person name="Unlu G."/>
            <person name="Saier M.H. Jr."/>
            <person name="Klaenhammer T."/>
            <person name="Richardson P."/>
            <person name="Kozyavkin S."/>
            <person name="Weimer B.C."/>
            <person name="Mills D.A."/>
        </authorList>
    </citation>
    <scope>NUCLEOTIDE SEQUENCE [LARGE SCALE GENOMIC DNA]</scope>
    <source>
        <strain>ATCC 8293 / DSM 20343 / BCRC 11652 / CCM 1803 / JCM 6124 / NCDO 523 / NBRC 100496 / NCIMB 8023 / NCTC 12954 / NRRL B-1118 / 37Y</strain>
    </source>
</reference>
<name>IF2_LEUMM</name>
<dbReference type="EMBL" id="CP000414">
    <property type="protein sequence ID" value="ABJ62448.1"/>
    <property type="molecule type" value="Genomic_DNA"/>
</dbReference>
<dbReference type="RefSeq" id="WP_011680054.1">
    <property type="nucleotide sequence ID" value="NC_008531.1"/>
</dbReference>
<dbReference type="SMR" id="Q03WH4"/>
<dbReference type="EnsemblBacteria" id="ABJ62448">
    <property type="protein sequence ID" value="ABJ62448"/>
    <property type="gene ID" value="LEUM_1355"/>
</dbReference>
<dbReference type="GeneID" id="29576892"/>
<dbReference type="KEGG" id="lme:LEUM_1355"/>
<dbReference type="eggNOG" id="COG0532">
    <property type="taxonomic scope" value="Bacteria"/>
</dbReference>
<dbReference type="HOGENOM" id="CLU_006301_5_0_9"/>
<dbReference type="Proteomes" id="UP000000362">
    <property type="component" value="Chromosome"/>
</dbReference>
<dbReference type="GO" id="GO:0005829">
    <property type="term" value="C:cytosol"/>
    <property type="evidence" value="ECO:0007669"/>
    <property type="project" value="TreeGrafter"/>
</dbReference>
<dbReference type="GO" id="GO:0005525">
    <property type="term" value="F:GTP binding"/>
    <property type="evidence" value="ECO:0007669"/>
    <property type="project" value="UniProtKB-KW"/>
</dbReference>
<dbReference type="GO" id="GO:0003924">
    <property type="term" value="F:GTPase activity"/>
    <property type="evidence" value="ECO:0007669"/>
    <property type="project" value="UniProtKB-UniRule"/>
</dbReference>
<dbReference type="GO" id="GO:0003743">
    <property type="term" value="F:translation initiation factor activity"/>
    <property type="evidence" value="ECO:0007669"/>
    <property type="project" value="UniProtKB-UniRule"/>
</dbReference>
<dbReference type="CDD" id="cd01887">
    <property type="entry name" value="IF2_eIF5B"/>
    <property type="match status" value="1"/>
</dbReference>
<dbReference type="CDD" id="cd03702">
    <property type="entry name" value="IF2_mtIF2_II"/>
    <property type="match status" value="1"/>
</dbReference>
<dbReference type="CDD" id="cd03692">
    <property type="entry name" value="mtIF2_IVc"/>
    <property type="match status" value="1"/>
</dbReference>
<dbReference type="FunFam" id="2.40.30.10:FF:000007">
    <property type="entry name" value="Translation initiation factor IF-2"/>
    <property type="match status" value="1"/>
</dbReference>
<dbReference type="FunFam" id="2.40.30.10:FF:000008">
    <property type="entry name" value="Translation initiation factor IF-2"/>
    <property type="match status" value="1"/>
</dbReference>
<dbReference type="FunFam" id="3.40.50.10050:FF:000001">
    <property type="entry name" value="Translation initiation factor IF-2"/>
    <property type="match status" value="1"/>
</dbReference>
<dbReference type="FunFam" id="3.40.50.300:FF:000019">
    <property type="entry name" value="Translation initiation factor IF-2"/>
    <property type="match status" value="1"/>
</dbReference>
<dbReference type="Gene3D" id="3.40.50.300">
    <property type="entry name" value="P-loop containing nucleotide triphosphate hydrolases"/>
    <property type="match status" value="1"/>
</dbReference>
<dbReference type="Gene3D" id="2.40.30.10">
    <property type="entry name" value="Translation factors"/>
    <property type="match status" value="2"/>
</dbReference>
<dbReference type="Gene3D" id="3.40.50.10050">
    <property type="entry name" value="Translation initiation factor IF- 2, domain 3"/>
    <property type="match status" value="1"/>
</dbReference>
<dbReference type="HAMAP" id="MF_00100_B">
    <property type="entry name" value="IF_2_B"/>
    <property type="match status" value="1"/>
</dbReference>
<dbReference type="InterPro" id="IPR053905">
    <property type="entry name" value="EF-G-like_DII"/>
</dbReference>
<dbReference type="InterPro" id="IPR044145">
    <property type="entry name" value="IF2_II"/>
</dbReference>
<dbReference type="InterPro" id="IPR006847">
    <property type="entry name" value="IF2_N"/>
</dbReference>
<dbReference type="InterPro" id="IPR027417">
    <property type="entry name" value="P-loop_NTPase"/>
</dbReference>
<dbReference type="InterPro" id="IPR005225">
    <property type="entry name" value="Small_GTP-bd"/>
</dbReference>
<dbReference type="InterPro" id="IPR000795">
    <property type="entry name" value="T_Tr_GTP-bd_dom"/>
</dbReference>
<dbReference type="InterPro" id="IPR000178">
    <property type="entry name" value="TF_IF2_bacterial-like"/>
</dbReference>
<dbReference type="InterPro" id="IPR015760">
    <property type="entry name" value="TIF_IF2"/>
</dbReference>
<dbReference type="InterPro" id="IPR023115">
    <property type="entry name" value="TIF_IF2_dom3"/>
</dbReference>
<dbReference type="InterPro" id="IPR036925">
    <property type="entry name" value="TIF_IF2_dom3_sf"/>
</dbReference>
<dbReference type="InterPro" id="IPR009000">
    <property type="entry name" value="Transl_B-barrel_sf"/>
</dbReference>
<dbReference type="NCBIfam" id="TIGR00487">
    <property type="entry name" value="IF-2"/>
    <property type="match status" value="1"/>
</dbReference>
<dbReference type="NCBIfam" id="TIGR00231">
    <property type="entry name" value="small_GTP"/>
    <property type="match status" value="1"/>
</dbReference>
<dbReference type="PANTHER" id="PTHR43381:SF5">
    <property type="entry name" value="TR-TYPE G DOMAIN-CONTAINING PROTEIN"/>
    <property type="match status" value="1"/>
</dbReference>
<dbReference type="PANTHER" id="PTHR43381">
    <property type="entry name" value="TRANSLATION INITIATION FACTOR IF-2-RELATED"/>
    <property type="match status" value="1"/>
</dbReference>
<dbReference type="Pfam" id="PF22042">
    <property type="entry name" value="EF-G_D2"/>
    <property type="match status" value="1"/>
</dbReference>
<dbReference type="Pfam" id="PF00009">
    <property type="entry name" value="GTP_EFTU"/>
    <property type="match status" value="1"/>
</dbReference>
<dbReference type="Pfam" id="PF11987">
    <property type="entry name" value="IF-2"/>
    <property type="match status" value="1"/>
</dbReference>
<dbReference type="Pfam" id="PF04760">
    <property type="entry name" value="IF2_N"/>
    <property type="match status" value="1"/>
</dbReference>
<dbReference type="SUPFAM" id="SSF52156">
    <property type="entry name" value="Initiation factor IF2/eIF5b, domain 3"/>
    <property type="match status" value="1"/>
</dbReference>
<dbReference type="SUPFAM" id="SSF52540">
    <property type="entry name" value="P-loop containing nucleoside triphosphate hydrolases"/>
    <property type="match status" value="1"/>
</dbReference>
<dbReference type="SUPFAM" id="SSF50447">
    <property type="entry name" value="Translation proteins"/>
    <property type="match status" value="2"/>
</dbReference>
<dbReference type="PROSITE" id="PS51722">
    <property type="entry name" value="G_TR_2"/>
    <property type="match status" value="1"/>
</dbReference>
<proteinExistence type="inferred from homology"/>